<sequence>MDVIVGGGKYGVEAARFLEKRSRDYVIIDRNPECLAMRELDLVRVDSIEEVKEGRYFLKGGIEILPSLLKFKPEYIFPTAPLHVAAEALRLKFDLKPWNEVLDCIIGNLPARVVVSAGRGSVVVSYNRDADCLEKCSAPDICPVTKIKKPCPMHDLVKFAYPDAFVLISRQLEPGLGAISGEELAKLMKQAEKREKIVVATACRCHGVITALKRA</sequence>
<gene>
    <name type="ordered locus">AF_1314</name>
</gene>
<accession>O28955</accession>
<reference key="1">
    <citation type="journal article" date="1997" name="Nature">
        <title>The complete genome sequence of the hyperthermophilic, sulphate-reducing archaeon Archaeoglobus fulgidus.</title>
        <authorList>
            <person name="Klenk H.-P."/>
            <person name="Clayton R.A."/>
            <person name="Tomb J.-F."/>
            <person name="White O."/>
            <person name="Nelson K.E."/>
            <person name="Ketchum K.A."/>
            <person name="Dodson R.J."/>
            <person name="Gwinn M.L."/>
            <person name="Hickey E.K."/>
            <person name="Peterson J.D."/>
            <person name="Richardson D.L."/>
            <person name="Kerlavage A.R."/>
            <person name="Graham D.E."/>
            <person name="Kyrpides N.C."/>
            <person name="Fleischmann R.D."/>
            <person name="Quackenbush J."/>
            <person name="Lee N.H."/>
            <person name="Sutton G.G."/>
            <person name="Gill S.R."/>
            <person name="Kirkness E.F."/>
            <person name="Dougherty B.A."/>
            <person name="McKenney K."/>
            <person name="Adams M.D."/>
            <person name="Loftus B.J."/>
            <person name="Peterson S.N."/>
            <person name="Reich C.I."/>
            <person name="McNeil L.K."/>
            <person name="Badger J.H."/>
            <person name="Glodek A."/>
            <person name="Zhou L."/>
            <person name="Overbeek R."/>
            <person name="Gocayne J.D."/>
            <person name="Weidman J.F."/>
            <person name="McDonald L.A."/>
            <person name="Utterback T.R."/>
            <person name="Cotton M.D."/>
            <person name="Spriggs T."/>
            <person name="Artiach P."/>
            <person name="Kaine B.P."/>
            <person name="Sykes S.M."/>
            <person name="Sadow P.W."/>
            <person name="D'Andrea K.P."/>
            <person name="Bowman C."/>
            <person name="Fujii C."/>
            <person name="Garland S.A."/>
            <person name="Mason T.M."/>
            <person name="Olsen G.J."/>
            <person name="Fraser C.M."/>
            <person name="Smith H.O."/>
            <person name="Woese C.R."/>
            <person name="Venter J.C."/>
        </authorList>
    </citation>
    <scope>NUCLEOTIDE SEQUENCE [LARGE SCALE GENOMIC DNA]</scope>
    <source>
        <strain>ATCC 49558 / DSM 4304 / JCM 9628 / NBRC 100126 / VC-16</strain>
    </source>
</reference>
<feature type="chain" id="PRO_0000127986" description="Uncharacterized protein AF_1314">
    <location>
        <begin position="1"/>
        <end position="215"/>
    </location>
</feature>
<protein>
    <recommendedName>
        <fullName>Uncharacterized protein AF_1314</fullName>
    </recommendedName>
</protein>
<keyword id="KW-1185">Reference proteome</keyword>
<dbReference type="EMBL" id="AE000782">
    <property type="protein sequence ID" value="AAB89941.1"/>
    <property type="molecule type" value="Genomic_DNA"/>
</dbReference>
<dbReference type="PIR" id="A69414">
    <property type="entry name" value="A69414"/>
</dbReference>
<dbReference type="RefSeq" id="WP_010878811.1">
    <property type="nucleotide sequence ID" value="NC_000917.1"/>
</dbReference>
<dbReference type="STRING" id="224325.AF_1314"/>
<dbReference type="PaxDb" id="224325-AF_1314"/>
<dbReference type="EnsemblBacteria" id="AAB89941">
    <property type="protein sequence ID" value="AAB89941"/>
    <property type="gene ID" value="AF_1314"/>
</dbReference>
<dbReference type="GeneID" id="1484540"/>
<dbReference type="KEGG" id="afu:AF_1314"/>
<dbReference type="eggNOG" id="arCOG04423">
    <property type="taxonomic scope" value="Archaea"/>
</dbReference>
<dbReference type="HOGENOM" id="CLU_1280722_0_0_2"/>
<dbReference type="OrthoDB" id="137061at2157"/>
<dbReference type="Proteomes" id="UP000002199">
    <property type="component" value="Chromosome"/>
</dbReference>
<dbReference type="Gene3D" id="3.40.50.720">
    <property type="entry name" value="NAD(P)-binding Rossmann-like Domain"/>
    <property type="match status" value="1"/>
</dbReference>
<dbReference type="InterPro" id="IPR036188">
    <property type="entry name" value="FAD/NAD-bd_sf"/>
</dbReference>
<dbReference type="SUPFAM" id="SSF51905">
    <property type="entry name" value="FAD/NAD(P)-binding domain"/>
    <property type="match status" value="1"/>
</dbReference>
<proteinExistence type="predicted"/>
<organism>
    <name type="scientific">Archaeoglobus fulgidus (strain ATCC 49558 / DSM 4304 / JCM 9628 / NBRC 100126 / VC-16)</name>
    <dbReference type="NCBI Taxonomy" id="224325"/>
    <lineage>
        <taxon>Archaea</taxon>
        <taxon>Methanobacteriati</taxon>
        <taxon>Methanobacteriota</taxon>
        <taxon>Archaeoglobi</taxon>
        <taxon>Archaeoglobales</taxon>
        <taxon>Archaeoglobaceae</taxon>
        <taxon>Archaeoglobus</taxon>
    </lineage>
</organism>
<name>Y1314_ARCFU</name>